<evidence type="ECO:0000255" key="1">
    <source>
        <dbReference type="HAMAP-Rule" id="MF_01584"/>
    </source>
</evidence>
<gene>
    <name type="ordered locus">Sbal_1765</name>
</gene>
<name>Y1765_SHEB5</name>
<protein>
    <recommendedName>
        <fullName evidence="1">UPF0502 protein Sbal_1765</fullName>
    </recommendedName>
</protein>
<dbReference type="EMBL" id="CP000563">
    <property type="protein sequence ID" value="ABN61272.1"/>
    <property type="molecule type" value="Genomic_DNA"/>
</dbReference>
<dbReference type="RefSeq" id="WP_006086321.1">
    <property type="nucleotide sequence ID" value="NC_009052.1"/>
</dbReference>
<dbReference type="SMR" id="A3D3F9"/>
<dbReference type="STRING" id="325240.Sbal_1765"/>
<dbReference type="KEGG" id="sbl:Sbal_1765"/>
<dbReference type="HOGENOM" id="CLU_057831_2_0_6"/>
<dbReference type="OrthoDB" id="9784785at2"/>
<dbReference type="Proteomes" id="UP000001557">
    <property type="component" value="Chromosome"/>
</dbReference>
<dbReference type="Gene3D" id="1.10.10.10">
    <property type="entry name" value="Winged helix-like DNA-binding domain superfamily/Winged helix DNA-binding domain"/>
    <property type="match status" value="2"/>
</dbReference>
<dbReference type="HAMAP" id="MF_01584">
    <property type="entry name" value="UPF0502"/>
    <property type="match status" value="1"/>
</dbReference>
<dbReference type="InterPro" id="IPR007432">
    <property type="entry name" value="DUF480"/>
</dbReference>
<dbReference type="InterPro" id="IPR036388">
    <property type="entry name" value="WH-like_DNA-bd_sf"/>
</dbReference>
<dbReference type="InterPro" id="IPR036390">
    <property type="entry name" value="WH_DNA-bd_sf"/>
</dbReference>
<dbReference type="PANTHER" id="PTHR38768">
    <property type="entry name" value="UPF0502 PROTEIN YCEH"/>
    <property type="match status" value="1"/>
</dbReference>
<dbReference type="PANTHER" id="PTHR38768:SF1">
    <property type="entry name" value="UPF0502 PROTEIN YCEH"/>
    <property type="match status" value="1"/>
</dbReference>
<dbReference type="Pfam" id="PF04337">
    <property type="entry name" value="DUF480"/>
    <property type="match status" value="1"/>
</dbReference>
<dbReference type="SUPFAM" id="SSF46785">
    <property type="entry name" value="Winged helix' DNA-binding domain"/>
    <property type="match status" value="2"/>
</dbReference>
<reference key="1">
    <citation type="submission" date="2007-02" db="EMBL/GenBank/DDBJ databases">
        <title>Complete sequence of chromosome of Shewanella baltica OS155.</title>
        <authorList>
            <consortium name="US DOE Joint Genome Institute"/>
            <person name="Copeland A."/>
            <person name="Lucas S."/>
            <person name="Lapidus A."/>
            <person name="Barry K."/>
            <person name="Detter J.C."/>
            <person name="Glavina del Rio T."/>
            <person name="Hammon N."/>
            <person name="Israni S."/>
            <person name="Dalin E."/>
            <person name="Tice H."/>
            <person name="Pitluck S."/>
            <person name="Sims D.R."/>
            <person name="Brettin T."/>
            <person name="Bruce D."/>
            <person name="Han C."/>
            <person name="Tapia R."/>
            <person name="Brainard J."/>
            <person name="Schmutz J."/>
            <person name="Larimer F."/>
            <person name="Land M."/>
            <person name="Hauser L."/>
            <person name="Kyrpides N."/>
            <person name="Mikhailova N."/>
            <person name="Brettar I."/>
            <person name="Klappenbach J."/>
            <person name="Konstantinidis K."/>
            <person name="Rodrigues J."/>
            <person name="Tiedje J."/>
            <person name="Richardson P."/>
        </authorList>
    </citation>
    <scope>NUCLEOTIDE SEQUENCE [LARGE SCALE GENOMIC DNA]</scope>
    <source>
        <strain>OS155 / ATCC BAA-1091</strain>
    </source>
</reference>
<feature type="chain" id="PRO_1000069303" description="UPF0502 protein Sbal_1765">
    <location>
        <begin position="1"/>
        <end position="223"/>
    </location>
</feature>
<comment type="similarity">
    <text evidence="1">Belongs to the UPF0502 family.</text>
</comment>
<proteinExistence type="inferred from homology"/>
<organism>
    <name type="scientific">Shewanella baltica (strain OS155 / ATCC BAA-1091)</name>
    <dbReference type="NCBI Taxonomy" id="325240"/>
    <lineage>
        <taxon>Bacteria</taxon>
        <taxon>Pseudomonadati</taxon>
        <taxon>Pseudomonadota</taxon>
        <taxon>Gammaproteobacteria</taxon>
        <taxon>Alteromonadales</taxon>
        <taxon>Shewanellaceae</taxon>
        <taxon>Shewanella</taxon>
    </lineage>
</organism>
<keyword id="KW-1185">Reference proteome</keyword>
<accession>A3D3F9</accession>
<sequence length="223" mass="25179">MELTLHEARVIGCLLEKEITTPEQYPLSLNSLTLACNQKTSREPVLELSETQVQIAVDSLNRKRLISEQSGFGSRVVKYKHRFCNTEFSELQLSPAALAIVCLLLLRGPQTPGELRTRSNRLHEFKDVIEVEDCIRQLMNREKPFLKQLPREAGRRESRYVELFSAASSQLETAQPESASHTVAHVAVSLDAEPLELTKRVTELEQQVAELTQKLDELIASLS</sequence>